<keyword id="KW-0028">Amino-acid biosynthesis</keyword>
<keyword id="KW-0057">Aromatic amino acid biosynthesis</keyword>
<keyword id="KW-0274">FAD</keyword>
<keyword id="KW-0285">Flavoprotein</keyword>
<keyword id="KW-0288">FMN</keyword>
<keyword id="KW-0456">Lyase</keyword>
<keyword id="KW-0521">NADP</keyword>
<gene>
    <name evidence="1" type="primary">aroC</name>
    <name type="ordered locus">MS0866</name>
</gene>
<feature type="chain" id="PRO_0000140609" description="Chorismate synthase">
    <location>
        <begin position="1"/>
        <end position="359"/>
    </location>
</feature>
<feature type="binding site" evidence="1">
    <location>
        <position position="48"/>
    </location>
    <ligand>
        <name>NADP(+)</name>
        <dbReference type="ChEBI" id="CHEBI:58349"/>
    </ligand>
</feature>
<feature type="binding site" evidence="1">
    <location>
        <position position="54"/>
    </location>
    <ligand>
        <name>NADP(+)</name>
        <dbReference type="ChEBI" id="CHEBI:58349"/>
    </ligand>
</feature>
<feature type="binding site" evidence="1">
    <location>
        <begin position="125"/>
        <end position="127"/>
    </location>
    <ligand>
        <name>FMN</name>
        <dbReference type="ChEBI" id="CHEBI:58210"/>
    </ligand>
</feature>
<feature type="binding site" evidence="1">
    <location>
        <begin position="243"/>
        <end position="244"/>
    </location>
    <ligand>
        <name>FMN</name>
        <dbReference type="ChEBI" id="CHEBI:58210"/>
    </ligand>
</feature>
<feature type="binding site" evidence="1">
    <location>
        <position position="283"/>
    </location>
    <ligand>
        <name>FMN</name>
        <dbReference type="ChEBI" id="CHEBI:58210"/>
    </ligand>
</feature>
<feature type="binding site" evidence="1">
    <location>
        <begin position="298"/>
        <end position="302"/>
    </location>
    <ligand>
        <name>FMN</name>
        <dbReference type="ChEBI" id="CHEBI:58210"/>
    </ligand>
</feature>
<feature type="binding site" evidence="1">
    <location>
        <position position="324"/>
    </location>
    <ligand>
        <name>FMN</name>
        <dbReference type="ChEBI" id="CHEBI:58210"/>
    </ligand>
</feature>
<comment type="function">
    <text evidence="1">Catalyzes the anti-1,4-elimination of the C-3 phosphate and the C-6 proR hydrogen from 5-enolpyruvylshikimate-3-phosphate (EPSP) to yield chorismate, which is the branch point compound that serves as the starting substrate for the three terminal pathways of aromatic amino acid biosynthesis. This reaction introduces a second double bond into the aromatic ring system.</text>
</comment>
<comment type="catalytic activity">
    <reaction evidence="1">
        <text>5-O-(1-carboxyvinyl)-3-phosphoshikimate = chorismate + phosphate</text>
        <dbReference type="Rhea" id="RHEA:21020"/>
        <dbReference type="ChEBI" id="CHEBI:29748"/>
        <dbReference type="ChEBI" id="CHEBI:43474"/>
        <dbReference type="ChEBI" id="CHEBI:57701"/>
        <dbReference type="EC" id="4.2.3.5"/>
    </reaction>
</comment>
<comment type="cofactor">
    <cofactor evidence="1">
        <name>FMNH2</name>
        <dbReference type="ChEBI" id="CHEBI:57618"/>
    </cofactor>
    <text evidence="1">Reduced FMN (FMNH(2)).</text>
</comment>
<comment type="pathway">
    <text evidence="1">Metabolic intermediate biosynthesis; chorismate biosynthesis; chorismate from D-erythrose 4-phosphate and phosphoenolpyruvate: step 7/7.</text>
</comment>
<comment type="subunit">
    <text evidence="1">Homotetramer.</text>
</comment>
<comment type="similarity">
    <text evidence="1">Belongs to the chorismate synthase family.</text>
</comment>
<accession>Q65U87</accession>
<organism>
    <name type="scientific">Mannheimia succiniciproducens (strain KCTC 0769BP / MBEL55E)</name>
    <dbReference type="NCBI Taxonomy" id="221988"/>
    <lineage>
        <taxon>Bacteria</taxon>
        <taxon>Pseudomonadati</taxon>
        <taxon>Pseudomonadota</taxon>
        <taxon>Gammaproteobacteria</taxon>
        <taxon>Pasteurellales</taxon>
        <taxon>Pasteurellaceae</taxon>
        <taxon>Basfia</taxon>
    </lineage>
</organism>
<sequence>MAGNSIGQLFRVTTFGESHGIALGCIVDGVPPNMALSEADIQPDLDRRKPGTSRYTTPRREDDEVQILSGVFEGKTTGTSIGMIIKNGDQRSKDYGDIMDKFRPGHADYTYQQKYGIRDYRGGGRSSARETAMRVAAGAIAKKYLREQFGVEVRGFLSQIGDVKIAPQNISEIDWAQVNDNPFFCPDQSAVEKFDELIRQLKKDGDSIGAKLTVVAENVPVGLGEPVFDRLDADLAHALMGINAVKAVEIGDGFAVVEQRGTQHRDEMTPQGFLSNHAGGILGGISTGQPIIATIALKPTSSITVPGRTVNLNNEPVELITKGRHDPCVGIRAVPIAEAMTAIVLLDHLLRHRAQCGLK</sequence>
<reference key="1">
    <citation type="journal article" date="2004" name="Nat. Biotechnol.">
        <title>The genome sequence of the capnophilic rumen bacterium Mannheimia succiniciproducens.</title>
        <authorList>
            <person name="Hong S.H."/>
            <person name="Kim J.S."/>
            <person name="Lee S.Y."/>
            <person name="In Y.H."/>
            <person name="Choi S.S."/>
            <person name="Rih J.-K."/>
            <person name="Kim C.H."/>
            <person name="Jeong H."/>
            <person name="Hur C.G."/>
            <person name="Kim J.J."/>
        </authorList>
    </citation>
    <scope>NUCLEOTIDE SEQUENCE [LARGE SCALE GENOMIC DNA]</scope>
    <source>
        <strain>KCTC 0769BP / MBEL55E</strain>
    </source>
</reference>
<proteinExistence type="inferred from homology"/>
<dbReference type="EC" id="4.2.3.5" evidence="1"/>
<dbReference type="EMBL" id="AE016827">
    <property type="protein sequence ID" value="AAU37473.1"/>
    <property type="molecule type" value="Genomic_DNA"/>
</dbReference>
<dbReference type="RefSeq" id="WP_011200044.1">
    <property type="nucleotide sequence ID" value="NC_006300.1"/>
</dbReference>
<dbReference type="SMR" id="Q65U87"/>
<dbReference type="STRING" id="221988.MS0866"/>
<dbReference type="KEGG" id="msu:MS0866"/>
<dbReference type="eggNOG" id="COG0082">
    <property type="taxonomic scope" value="Bacteria"/>
</dbReference>
<dbReference type="HOGENOM" id="CLU_034547_0_2_6"/>
<dbReference type="OrthoDB" id="9771806at2"/>
<dbReference type="UniPathway" id="UPA00053">
    <property type="reaction ID" value="UER00090"/>
</dbReference>
<dbReference type="Proteomes" id="UP000000607">
    <property type="component" value="Chromosome"/>
</dbReference>
<dbReference type="GO" id="GO:0005829">
    <property type="term" value="C:cytosol"/>
    <property type="evidence" value="ECO:0007669"/>
    <property type="project" value="TreeGrafter"/>
</dbReference>
<dbReference type="GO" id="GO:0004107">
    <property type="term" value="F:chorismate synthase activity"/>
    <property type="evidence" value="ECO:0007669"/>
    <property type="project" value="UniProtKB-UniRule"/>
</dbReference>
<dbReference type="GO" id="GO:0010181">
    <property type="term" value="F:FMN binding"/>
    <property type="evidence" value="ECO:0007669"/>
    <property type="project" value="TreeGrafter"/>
</dbReference>
<dbReference type="GO" id="GO:0008652">
    <property type="term" value="P:amino acid biosynthetic process"/>
    <property type="evidence" value="ECO:0007669"/>
    <property type="project" value="UniProtKB-KW"/>
</dbReference>
<dbReference type="GO" id="GO:0009073">
    <property type="term" value="P:aromatic amino acid family biosynthetic process"/>
    <property type="evidence" value="ECO:0007669"/>
    <property type="project" value="UniProtKB-KW"/>
</dbReference>
<dbReference type="GO" id="GO:0009423">
    <property type="term" value="P:chorismate biosynthetic process"/>
    <property type="evidence" value="ECO:0007669"/>
    <property type="project" value="UniProtKB-UniRule"/>
</dbReference>
<dbReference type="CDD" id="cd07304">
    <property type="entry name" value="Chorismate_synthase"/>
    <property type="match status" value="1"/>
</dbReference>
<dbReference type="FunFam" id="3.60.150.10:FF:000001">
    <property type="entry name" value="Chorismate synthase"/>
    <property type="match status" value="1"/>
</dbReference>
<dbReference type="Gene3D" id="3.60.150.10">
    <property type="entry name" value="Chorismate synthase AroC"/>
    <property type="match status" value="1"/>
</dbReference>
<dbReference type="HAMAP" id="MF_00300">
    <property type="entry name" value="Chorismate_synth"/>
    <property type="match status" value="1"/>
</dbReference>
<dbReference type="InterPro" id="IPR000453">
    <property type="entry name" value="Chorismate_synth"/>
</dbReference>
<dbReference type="InterPro" id="IPR035904">
    <property type="entry name" value="Chorismate_synth_AroC_sf"/>
</dbReference>
<dbReference type="InterPro" id="IPR020541">
    <property type="entry name" value="Chorismate_synthase_CS"/>
</dbReference>
<dbReference type="NCBIfam" id="TIGR00033">
    <property type="entry name" value="aroC"/>
    <property type="match status" value="1"/>
</dbReference>
<dbReference type="NCBIfam" id="NF003793">
    <property type="entry name" value="PRK05382.1"/>
    <property type="match status" value="1"/>
</dbReference>
<dbReference type="PANTHER" id="PTHR21085">
    <property type="entry name" value="CHORISMATE SYNTHASE"/>
    <property type="match status" value="1"/>
</dbReference>
<dbReference type="PANTHER" id="PTHR21085:SF0">
    <property type="entry name" value="CHORISMATE SYNTHASE"/>
    <property type="match status" value="1"/>
</dbReference>
<dbReference type="Pfam" id="PF01264">
    <property type="entry name" value="Chorismate_synt"/>
    <property type="match status" value="1"/>
</dbReference>
<dbReference type="PIRSF" id="PIRSF001456">
    <property type="entry name" value="Chorismate_synth"/>
    <property type="match status" value="1"/>
</dbReference>
<dbReference type="SUPFAM" id="SSF103263">
    <property type="entry name" value="Chorismate synthase, AroC"/>
    <property type="match status" value="1"/>
</dbReference>
<dbReference type="PROSITE" id="PS00787">
    <property type="entry name" value="CHORISMATE_SYNTHASE_1"/>
    <property type="match status" value="1"/>
</dbReference>
<dbReference type="PROSITE" id="PS00788">
    <property type="entry name" value="CHORISMATE_SYNTHASE_2"/>
    <property type="match status" value="1"/>
</dbReference>
<dbReference type="PROSITE" id="PS00789">
    <property type="entry name" value="CHORISMATE_SYNTHASE_3"/>
    <property type="match status" value="1"/>
</dbReference>
<name>AROC_MANSM</name>
<evidence type="ECO:0000255" key="1">
    <source>
        <dbReference type="HAMAP-Rule" id="MF_00300"/>
    </source>
</evidence>
<protein>
    <recommendedName>
        <fullName evidence="1">Chorismate synthase</fullName>
        <shortName evidence="1">CS</shortName>
        <ecNumber evidence="1">4.2.3.5</ecNumber>
    </recommendedName>
    <alternativeName>
        <fullName evidence="1">5-enolpyruvylshikimate-3-phosphate phospholyase</fullName>
    </alternativeName>
</protein>